<gene>
    <name evidence="1" type="primary">tyrS</name>
    <name type="ordered locus">MMOB5470</name>
</gene>
<keyword id="KW-0030">Aminoacyl-tRNA synthetase</keyword>
<keyword id="KW-0067">ATP-binding</keyword>
<keyword id="KW-0963">Cytoplasm</keyword>
<keyword id="KW-0436">Ligase</keyword>
<keyword id="KW-0547">Nucleotide-binding</keyword>
<keyword id="KW-0648">Protein biosynthesis</keyword>
<keyword id="KW-1185">Reference proteome</keyword>
<keyword id="KW-0694">RNA-binding</keyword>
<organism>
    <name type="scientific">Mycoplasma mobile (strain ATCC 43663 / 163K / NCTC 11711)</name>
    <name type="common">Mesomycoplasma mobile</name>
    <dbReference type="NCBI Taxonomy" id="267748"/>
    <lineage>
        <taxon>Bacteria</taxon>
        <taxon>Bacillati</taxon>
        <taxon>Mycoplasmatota</taxon>
        <taxon>Mycoplasmoidales</taxon>
        <taxon>Metamycoplasmataceae</taxon>
        <taxon>Mesomycoplasma</taxon>
    </lineage>
</organism>
<name>SYY_MYCM1</name>
<accession>Q6KH97</accession>
<proteinExistence type="inferred from homology"/>
<comment type="function">
    <text evidence="1">Catalyzes the attachment of tyrosine to tRNA(Tyr) in a two-step reaction: tyrosine is first activated by ATP to form Tyr-AMP and then transferred to the acceptor end of tRNA(Tyr).</text>
</comment>
<comment type="catalytic activity">
    <reaction evidence="1">
        <text>tRNA(Tyr) + L-tyrosine + ATP = L-tyrosyl-tRNA(Tyr) + AMP + diphosphate + H(+)</text>
        <dbReference type="Rhea" id="RHEA:10220"/>
        <dbReference type="Rhea" id="RHEA-COMP:9706"/>
        <dbReference type="Rhea" id="RHEA-COMP:9707"/>
        <dbReference type="ChEBI" id="CHEBI:15378"/>
        <dbReference type="ChEBI" id="CHEBI:30616"/>
        <dbReference type="ChEBI" id="CHEBI:33019"/>
        <dbReference type="ChEBI" id="CHEBI:58315"/>
        <dbReference type="ChEBI" id="CHEBI:78442"/>
        <dbReference type="ChEBI" id="CHEBI:78536"/>
        <dbReference type="ChEBI" id="CHEBI:456215"/>
        <dbReference type="EC" id="6.1.1.1"/>
    </reaction>
</comment>
<comment type="subunit">
    <text evidence="1">Homodimer.</text>
</comment>
<comment type="subcellular location">
    <subcellularLocation>
        <location evidence="1">Cytoplasm</location>
    </subcellularLocation>
</comment>
<comment type="similarity">
    <text evidence="1">Belongs to the class-I aminoacyl-tRNA synthetase family. TyrS type 1 subfamily.</text>
</comment>
<dbReference type="EC" id="6.1.1.1" evidence="1"/>
<dbReference type="EMBL" id="AE017308">
    <property type="protein sequence ID" value="AAT28033.1"/>
    <property type="molecule type" value="Genomic_DNA"/>
</dbReference>
<dbReference type="RefSeq" id="WP_011265067.1">
    <property type="nucleotide sequence ID" value="NC_006908.1"/>
</dbReference>
<dbReference type="SMR" id="Q6KH97"/>
<dbReference type="STRING" id="267748.MMOB5470"/>
<dbReference type="KEGG" id="mmo:MMOB5470"/>
<dbReference type="eggNOG" id="COG0162">
    <property type="taxonomic scope" value="Bacteria"/>
</dbReference>
<dbReference type="HOGENOM" id="CLU_024003_0_2_14"/>
<dbReference type="OrthoDB" id="9804243at2"/>
<dbReference type="Proteomes" id="UP000009072">
    <property type="component" value="Chromosome"/>
</dbReference>
<dbReference type="GO" id="GO:0005829">
    <property type="term" value="C:cytosol"/>
    <property type="evidence" value="ECO:0007669"/>
    <property type="project" value="TreeGrafter"/>
</dbReference>
<dbReference type="GO" id="GO:0005524">
    <property type="term" value="F:ATP binding"/>
    <property type="evidence" value="ECO:0007669"/>
    <property type="project" value="UniProtKB-UniRule"/>
</dbReference>
<dbReference type="GO" id="GO:0003723">
    <property type="term" value="F:RNA binding"/>
    <property type="evidence" value="ECO:0007669"/>
    <property type="project" value="UniProtKB-KW"/>
</dbReference>
<dbReference type="GO" id="GO:0004831">
    <property type="term" value="F:tyrosine-tRNA ligase activity"/>
    <property type="evidence" value="ECO:0007669"/>
    <property type="project" value="UniProtKB-UniRule"/>
</dbReference>
<dbReference type="GO" id="GO:0006437">
    <property type="term" value="P:tyrosyl-tRNA aminoacylation"/>
    <property type="evidence" value="ECO:0007669"/>
    <property type="project" value="UniProtKB-UniRule"/>
</dbReference>
<dbReference type="CDD" id="cd00805">
    <property type="entry name" value="TyrRS_core"/>
    <property type="match status" value="1"/>
</dbReference>
<dbReference type="FunFam" id="1.10.240.10:FF:000001">
    <property type="entry name" value="Tyrosine--tRNA ligase"/>
    <property type="match status" value="1"/>
</dbReference>
<dbReference type="Gene3D" id="3.40.50.620">
    <property type="entry name" value="HUPs"/>
    <property type="match status" value="1"/>
</dbReference>
<dbReference type="Gene3D" id="3.10.290.10">
    <property type="entry name" value="RNA-binding S4 domain"/>
    <property type="match status" value="1"/>
</dbReference>
<dbReference type="Gene3D" id="1.10.240.10">
    <property type="entry name" value="Tyrosyl-Transfer RNA Synthetase"/>
    <property type="match status" value="1"/>
</dbReference>
<dbReference type="HAMAP" id="MF_02006">
    <property type="entry name" value="Tyr_tRNA_synth_type1"/>
    <property type="match status" value="1"/>
</dbReference>
<dbReference type="InterPro" id="IPR001412">
    <property type="entry name" value="aa-tRNA-synth_I_CS"/>
</dbReference>
<dbReference type="InterPro" id="IPR002305">
    <property type="entry name" value="aa-tRNA-synth_Ic"/>
</dbReference>
<dbReference type="InterPro" id="IPR014729">
    <property type="entry name" value="Rossmann-like_a/b/a_fold"/>
</dbReference>
<dbReference type="InterPro" id="IPR036986">
    <property type="entry name" value="S4_RNA-bd_sf"/>
</dbReference>
<dbReference type="InterPro" id="IPR002307">
    <property type="entry name" value="Tyr-tRNA-ligase"/>
</dbReference>
<dbReference type="InterPro" id="IPR024088">
    <property type="entry name" value="Tyr-tRNA-ligase_bac-type"/>
</dbReference>
<dbReference type="InterPro" id="IPR024107">
    <property type="entry name" value="Tyr-tRNA-ligase_bac_1"/>
</dbReference>
<dbReference type="NCBIfam" id="TIGR00234">
    <property type="entry name" value="tyrS"/>
    <property type="match status" value="1"/>
</dbReference>
<dbReference type="PANTHER" id="PTHR11766:SF0">
    <property type="entry name" value="TYROSINE--TRNA LIGASE, MITOCHONDRIAL"/>
    <property type="match status" value="1"/>
</dbReference>
<dbReference type="PANTHER" id="PTHR11766">
    <property type="entry name" value="TYROSYL-TRNA SYNTHETASE"/>
    <property type="match status" value="1"/>
</dbReference>
<dbReference type="Pfam" id="PF00579">
    <property type="entry name" value="tRNA-synt_1b"/>
    <property type="match status" value="1"/>
</dbReference>
<dbReference type="PRINTS" id="PR01040">
    <property type="entry name" value="TRNASYNTHTYR"/>
</dbReference>
<dbReference type="SUPFAM" id="SSF55174">
    <property type="entry name" value="Alpha-L RNA-binding motif"/>
    <property type="match status" value="1"/>
</dbReference>
<dbReference type="SUPFAM" id="SSF52374">
    <property type="entry name" value="Nucleotidylyl transferase"/>
    <property type="match status" value="1"/>
</dbReference>
<dbReference type="PROSITE" id="PS00178">
    <property type="entry name" value="AA_TRNA_LIGASE_I"/>
    <property type="match status" value="1"/>
</dbReference>
<dbReference type="PROSITE" id="PS50889">
    <property type="entry name" value="S4"/>
    <property type="match status" value="1"/>
</dbReference>
<reference key="1">
    <citation type="journal article" date="2004" name="Genome Res.">
        <title>The complete genome and proteome of Mycoplasma mobile.</title>
        <authorList>
            <person name="Jaffe J.D."/>
            <person name="Stange-Thomann N."/>
            <person name="Smith C."/>
            <person name="DeCaprio D."/>
            <person name="Fisher S."/>
            <person name="Butler J."/>
            <person name="Calvo S."/>
            <person name="Elkins T."/>
            <person name="FitzGerald M.G."/>
            <person name="Hafez N."/>
            <person name="Kodira C.D."/>
            <person name="Major J."/>
            <person name="Wang S."/>
            <person name="Wilkinson J."/>
            <person name="Nicol R."/>
            <person name="Nusbaum C."/>
            <person name="Birren B."/>
            <person name="Berg H.C."/>
            <person name="Church G.M."/>
        </authorList>
    </citation>
    <scope>NUCLEOTIDE SEQUENCE [LARGE SCALE GENOMIC DNA]</scope>
    <source>
        <strain>ATCC 43663 / NCTC 11711 / 163 K</strain>
    </source>
</reference>
<evidence type="ECO:0000255" key="1">
    <source>
        <dbReference type="HAMAP-Rule" id="MF_02006"/>
    </source>
</evidence>
<protein>
    <recommendedName>
        <fullName evidence="1">Tyrosine--tRNA ligase</fullName>
        <ecNumber evidence="1">6.1.1.1</ecNumber>
    </recommendedName>
    <alternativeName>
        <fullName evidence="1">Tyrosyl-tRNA synthetase</fullName>
        <shortName evidence="1">TyrRS</shortName>
    </alternativeName>
</protein>
<feature type="chain" id="PRO_0000234734" description="Tyrosine--tRNA ligase">
    <location>
        <begin position="1"/>
        <end position="415"/>
    </location>
</feature>
<feature type="domain" description="S4 RNA-binding" evidence="1">
    <location>
        <begin position="349"/>
        <end position="414"/>
    </location>
</feature>
<feature type="short sequence motif" description="'HIGH' region">
    <location>
        <begin position="39"/>
        <end position="48"/>
    </location>
</feature>
<feature type="short sequence motif" description="'KMSKS' region">
    <location>
        <begin position="225"/>
        <end position="229"/>
    </location>
</feature>
<feature type="binding site" evidence="1">
    <location>
        <position position="34"/>
    </location>
    <ligand>
        <name>L-tyrosine</name>
        <dbReference type="ChEBI" id="CHEBI:58315"/>
    </ligand>
</feature>
<feature type="binding site" evidence="1">
    <location>
        <position position="163"/>
    </location>
    <ligand>
        <name>L-tyrosine</name>
        <dbReference type="ChEBI" id="CHEBI:58315"/>
    </ligand>
</feature>
<feature type="binding site" evidence="1">
    <location>
        <position position="167"/>
    </location>
    <ligand>
        <name>L-tyrosine</name>
        <dbReference type="ChEBI" id="CHEBI:58315"/>
    </ligand>
</feature>
<feature type="binding site" evidence="1">
    <location>
        <position position="228"/>
    </location>
    <ligand>
        <name>ATP</name>
        <dbReference type="ChEBI" id="CHEBI:30616"/>
    </ligand>
</feature>
<sequence>MNSFLKELQEKNLIQDISNIEKIENSLKNKMGIYVGFDPSAKSIHLGNFVVINVLLIAKKHRIPTVALIGGATGGIGDPSGKKSERILIDEDTLKKNTEAIKKQIKHFLPDAKIVNNSDFYKNQSFIDFLRDVGKFIQVSYMLSKEIVKNRLESGISFTEFAYSLIQANDFHYLFKNHNVGIQFGGSDQWGNITTGLELIRKRNGENSFSGGFTIKLLLKSDGTKFGKSEQGAIYLDPSLTSPYTMYQFLLNQNDSDLLNLFNFISDLGIKEILEIITKHSENPEKRYGQKMLANNIVNRIHGKNALNEVENISNILFKNGKINDLSKSEVSIIINSFEVNHVNFSNDEKIIDILDRAKIFKSKNEIRKLIEQKGLVVGAEIITDFDQILKDSNLTHGVIFARQGKKKIFIIKKS</sequence>